<keyword id="KW-0012">Acyltransferase</keyword>
<keyword id="KW-0028">Amino-acid biosynthesis</keyword>
<keyword id="KW-0055">Arginine biosynthesis</keyword>
<keyword id="KW-0963">Cytoplasm</keyword>
<keyword id="KW-1185">Reference proteome</keyword>
<keyword id="KW-0808">Transferase</keyword>
<organism>
    <name type="scientific">Pasteurella multocida (strain Pm70)</name>
    <dbReference type="NCBI Taxonomy" id="272843"/>
    <lineage>
        <taxon>Bacteria</taxon>
        <taxon>Pseudomonadati</taxon>
        <taxon>Pseudomonadota</taxon>
        <taxon>Gammaproteobacteria</taxon>
        <taxon>Pasteurellales</taxon>
        <taxon>Pasteurellaceae</taxon>
        <taxon>Pasteurella</taxon>
    </lineage>
</organism>
<comment type="catalytic activity">
    <reaction>
        <text>L-glutamate + acetyl-CoA = N-acetyl-L-glutamate + CoA + H(+)</text>
        <dbReference type="Rhea" id="RHEA:24292"/>
        <dbReference type="ChEBI" id="CHEBI:15378"/>
        <dbReference type="ChEBI" id="CHEBI:29985"/>
        <dbReference type="ChEBI" id="CHEBI:44337"/>
        <dbReference type="ChEBI" id="CHEBI:57287"/>
        <dbReference type="ChEBI" id="CHEBI:57288"/>
        <dbReference type="EC" id="2.3.1.1"/>
    </reaction>
</comment>
<comment type="pathway">
    <text>Amino-acid biosynthesis; L-arginine biosynthesis; N(2)-acetyl-L-ornithine from L-glutamate: step 1/4.</text>
</comment>
<comment type="subcellular location">
    <subcellularLocation>
        <location evidence="1">Cytoplasm</location>
    </subcellularLocation>
</comment>
<comment type="similarity">
    <text evidence="2">Belongs to the acetyltransferase family. ArgA subfamily.</text>
</comment>
<name>ARGA_PASMU</name>
<accession>Q9CMJ6</accession>
<protein>
    <recommendedName>
        <fullName>Amino-acid acetyltransferase</fullName>
        <ecNumber>2.3.1.1</ecNumber>
    </recommendedName>
    <alternativeName>
        <fullName>N-acetylglutamate synthase</fullName>
        <shortName>AGS</shortName>
        <shortName>NAGS</shortName>
    </alternativeName>
</protein>
<proteinExistence type="inferred from homology"/>
<dbReference type="EC" id="2.3.1.1"/>
<dbReference type="EMBL" id="AE004439">
    <property type="protein sequence ID" value="AAK02912.1"/>
    <property type="molecule type" value="Genomic_DNA"/>
</dbReference>
<dbReference type="RefSeq" id="WP_005756904.1">
    <property type="nucleotide sequence ID" value="NC_002663.1"/>
</dbReference>
<dbReference type="SMR" id="Q9CMJ6"/>
<dbReference type="STRING" id="272843.PM0828"/>
<dbReference type="EnsemblBacteria" id="AAK02912">
    <property type="protein sequence ID" value="AAK02912"/>
    <property type="gene ID" value="PM0828"/>
</dbReference>
<dbReference type="GeneID" id="77207745"/>
<dbReference type="KEGG" id="pmu:PM0828"/>
<dbReference type="PATRIC" id="fig|272843.6.peg.838"/>
<dbReference type="HOGENOM" id="CLU_024773_0_0_6"/>
<dbReference type="OrthoDB" id="9802238at2"/>
<dbReference type="UniPathway" id="UPA00068">
    <property type="reaction ID" value="UER00106"/>
</dbReference>
<dbReference type="Proteomes" id="UP000000809">
    <property type="component" value="Chromosome"/>
</dbReference>
<dbReference type="GO" id="GO:0005737">
    <property type="term" value="C:cytoplasm"/>
    <property type="evidence" value="ECO:0007669"/>
    <property type="project" value="UniProtKB-SubCell"/>
</dbReference>
<dbReference type="GO" id="GO:0004042">
    <property type="term" value="F:L-glutamate N-acetyltransferase activity"/>
    <property type="evidence" value="ECO:0007669"/>
    <property type="project" value="UniProtKB-UniRule"/>
</dbReference>
<dbReference type="GO" id="GO:0006526">
    <property type="term" value="P:L-arginine biosynthetic process"/>
    <property type="evidence" value="ECO:0007669"/>
    <property type="project" value="UniProtKB-UniRule"/>
</dbReference>
<dbReference type="CDD" id="cd04237">
    <property type="entry name" value="AAK_NAGS-ABP"/>
    <property type="match status" value="1"/>
</dbReference>
<dbReference type="CDD" id="cd04301">
    <property type="entry name" value="NAT_SF"/>
    <property type="match status" value="1"/>
</dbReference>
<dbReference type="Gene3D" id="3.40.630.30">
    <property type="match status" value="1"/>
</dbReference>
<dbReference type="Gene3D" id="3.40.1160.10">
    <property type="entry name" value="Acetylglutamate kinase-like"/>
    <property type="match status" value="1"/>
</dbReference>
<dbReference type="HAMAP" id="MF_01105">
    <property type="entry name" value="N_acetyl_glu_synth"/>
    <property type="match status" value="1"/>
</dbReference>
<dbReference type="InterPro" id="IPR036393">
    <property type="entry name" value="AceGlu_kinase-like_sf"/>
</dbReference>
<dbReference type="InterPro" id="IPR016181">
    <property type="entry name" value="Acyl_CoA_acyltransferase"/>
</dbReference>
<dbReference type="InterPro" id="IPR001048">
    <property type="entry name" value="Asp/Glu/Uridylate_kinase"/>
</dbReference>
<dbReference type="InterPro" id="IPR000182">
    <property type="entry name" value="GNAT_dom"/>
</dbReference>
<dbReference type="InterPro" id="IPR033719">
    <property type="entry name" value="NAGS_kin"/>
</dbReference>
<dbReference type="InterPro" id="IPR010167">
    <property type="entry name" value="NH2A_AcTrfase"/>
</dbReference>
<dbReference type="NCBIfam" id="TIGR01890">
    <property type="entry name" value="N-Ac-Glu-synth"/>
    <property type="match status" value="1"/>
</dbReference>
<dbReference type="NCBIfam" id="NF003641">
    <property type="entry name" value="PRK05279.1"/>
    <property type="match status" value="1"/>
</dbReference>
<dbReference type="PANTHER" id="PTHR30602">
    <property type="entry name" value="AMINO-ACID ACETYLTRANSFERASE"/>
    <property type="match status" value="1"/>
</dbReference>
<dbReference type="PANTHER" id="PTHR30602:SF12">
    <property type="entry name" value="AMINO-ACID ACETYLTRANSFERASE NAGS1, CHLOROPLASTIC-RELATED"/>
    <property type="match status" value="1"/>
</dbReference>
<dbReference type="Pfam" id="PF00696">
    <property type="entry name" value="AA_kinase"/>
    <property type="match status" value="1"/>
</dbReference>
<dbReference type="Pfam" id="PF00583">
    <property type="entry name" value="Acetyltransf_1"/>
    <property type="match status" value="1"/>
</dbReference>
<dbReference type="PIRSF" id="PIRSF000423">
    <property type="entry name" value="ArgA"/>
    <property type="match status" value="1"/>
</dbReference>
<dbReference type="SUPFAM" id="SSF55729">
    <property type="entry name" value="Acyl-CoA N-acyltransferases (Nat)"/>
    <property type="match status" value="1"/>
</dbReference>
<dbReference type="SUPFAM" id="SSF53633">
    <property type="entry name" value="Carbamate kinase-like"/>
    <property type="match status" value="1"/>
</dbReference>
<dbReference type="PROSITE" id="PS51186">
    <property type="entry name" value="GNAT"/>
    <property type="match status" value="1"/>
</dbReference>
<gene>
    <name type="primary">argA</name>
    <name type="ordered locus">PM0828</name>
</gene>
<feature type="chain" id="PRO_0000186796" description="Amino-acid acetyltransferase">
    <location>
        <begin position="1"/>
        <end position="440"/>
    </location>
</feature>
<feature type="domain" description="N-acetyltransferase">
    <location>
        <begin position="289"/>
        <end position="429"/>
    </location>
</feature>
<evidence type="ECO:0000250" key="1"/>
<evidence type="ECO:0000305" key="2"/>
<sequence>MRSTELVHWFRQSTPYVNMHRGKTFVIMLDGDTIACPNFVNIINDISLLHSLGIKLVLVFGARYQINELLQQHQIESVYHKNIRITDLTSLELVKQAVGKLNYDIASRLSLRLPHSPLIDVVSGNFVLAQPIGVDDGIDYQLSGKIRRINTESIQQQLDRDAIVLIGPIAPSVTGESFNLPFEEIASQLAIKLKAEKLIGFSATQGILDENNQTISDLLPQDAELYLAKLIQQNQYHSSQARFLQAAIEACRFGIKRSHLISYEEDGSLLQELFTRDGVGTQLSMEHSETIRLATVSDIPALLELIRPLEQQGILVKRSREQLEMEINQYTIIDRDGVIIACAALNCYADEKMAEMACVAVHPDYRNSSRGDILLEAIQKRAKQLGIEKLFVLTTRTVHWFQERGFQLAEIADLPDKKRQHYNYQRRSKILIQALQNKKG</sequence>
<reference key="1">
    <citation type="journal article" date="2001" name="Proc. Natl. Acad. Sci. U.S.A.">
        <title>Complete genomic sequence of Pasteurella multocida Pm70.</title>
        <authorList>
            <person name="May B.J."/>
            <person name="Zhang Q."/>
            <person name="Li L.L."/>
            <person name="Paustian M.L."/>
            <person name="Whittam T.S."/>
            <person name="Kapur V."/>
        </authorList>
    </citation>
    <scope>NUCLEOTIDE SEQUENCE [LARGE SCALE GENOMIC DNA]</scope>
    <source>
        <strain>Pm70</strain>
    </source>
</reference>